<name>COQ7_AZOVD</name>
<organism>
    <name type="scientific">Azotobacter vinelandii (strain DJ / ATCC BAA-1303)</name>
    <dbReference type="NCBI Taxonomy" id="322710"/>
    <lineage>
        <taxon>Bacteria</taxon>
        <taxon>Pseudomonadati</taxon>
        <taxon>Pseudomonadota</taxon>
        <taxon>Gammaproteobacteria</taxon>
        <taxon>Pseudomonadales</taxon>
        <taxon>Pseudomonadaceae</taxon>
        <taxon>Azotobacter</taxon>
    </lineage>
</organism>
<keyword id="KW-1003">Cell membrane</keyword>
<keyword id="KW-0408">Iron</keyword>
<keyword id="KW-0472">Membrane</keyword>
<keyword id="KW-0479">Metal-binding</keyword>
<keyword id="KW-0503">Monooxygenase</keyword>
<keyword id="KW-0560">Oxidoreductase</keyword>
<keyword id="KW-0831">Ubiquinone biosynthesis</keyword>
<comment type="function">
    <text evidence="1">Catalyzes the hydroxylation of 2-nonaprenyl-3-methyl-6-methoxy-1,4-benzoquinol during ubiquinone biosynthesis.</text>
</comment>
<comment type="catalytic activity">
    <reaction evidence="1">
        <text>a 5-methoxy-2-methyl-3-(all-trans-polyprenyl)benzene-1,4-diol + AH2 + O2 = a 3-demethylubiquinol + A + H2O</text>
        <dbReference type="Rhea" id="RHEA:50908"/>
        <dbReference type="Rhea" id="RHEA-COMP:10859"/>
        <dbReference type="Rhea" id="RHEA-COMP:10914"/>
        <dbReference type="ChEBI" id="CHEBI:13193"/>
        <dbReference type="ChEBI" id="CHEBI:15377"/>
        <dbReference type="ChEBI" id="CHEBI:15379"/>
        <dbReference type="ChEBI" id="CHEBI:17499"/>
        <dbReference type="ChEBI" id="CHEBI:84167"/>
        <dbReference type="ChEBI" id="CHEBI:84422"/>
        <dbReference type="EC" id="1.14.99.60"/>
    </reaction>
</comment>
<comment type="cofactor">
    <cofactor evidence="1">
        <name>Fe cation</name>
        <dbReference type="ChEBI" id="CHEBI:24875"/>
    </cofactor>
    <text evidence="1">Binds 2 iron ions per subunit.</text>
</comment>
<comment type="pathway">
    <text evidence="1">Cofactor biosynthesis; ubiquinone biosynthesis.</text>
</comment>
<comment type="subcellular location">
    <subcellularLocation>
        <location evidence="1">Cell membrane</location>
        <topology evidence="1">Peripheral membrane protein</topology>
    </subcellularLocation>
</comment>
<comment type="similarity">
    <text evidence="1">Belongs to the COQ7 family.</text>
</comment>
<reference key="1">
    <citation type="journal article" date="2009" name="J. Bacteriol.">
        <title>Genome sequence of Azotobacter vinelandii, an obligate aerobe specialized to support diverse anaerobic metabolic processes.</title>
        <authorList>
            <person name="Setubal J.C."/>
            <person name="Dos Santos P."/>
            <person name="Goldman B.S."/>
            <person name="Ertesvaag H."/>
            <person name="Espin G."/>
            <person name="Rubio L.M."/>
            <person name="Valla S."/>
            <person name="Almeida N.F."/>
            <person name="Balasubramanian D."/>
            <person name="Cromes L."/>
            <person name="Curatti L."/>
            <person name="Du Z."/>
            <person name="Godsy E."/>
            <person name="Goodner B."/>
            <person name="Hellner-Burris K."/>
            <person name="Hernandez J.A."/>
            <person name="Houmiel K."/>
            <person name="Imperial J."/>
            <person name="Kennedy C."/>
            <person name="Larson T.J."/>
            <person name="Latreille P."/>
            <person name="Ligon L.S."/>
            <person name="Lu J."/>
            <person name="Maerk M."/>
            <person name="Miller N.M."/>
            <person name="Norton S."/>
            <person name="O'Carroll I.P."/>
            <person name="Paulsen I."/>
            <person name="Raulfs E.C."/>
            <person name="Roemer R."/>
            <person name="Rosser J."/>
            <person name="Segura D."/>
            <person name="Slater S."/>
            <person name="Stricklin S.L."/>
            <person name="Studholme D.J."/>
            <person name="Sun J."/>
            <person name="Viana C.J."/>
            <person name="Wallin E."/>
            <person name="Wang B."/>
            <person name="Wheeler C."/>
            <person name="Zhu H."/>
            <person name="Dean D.R."/>
            <person name="Dixon R."/>
            <person name="Wood D."/>
        </authorList>
    </citation>
    <scope>NUCLEOTIDE SEQUENCE [LARGE SCALE GENOMIC DNA]</scope>
    <source>
        <strain>DJ / ATCC BAA-1303</strain>
    </source>
</reference>
<protein>
    <recommendedName>
        <fullName evidence="1">3-demethoxyubiquinol 3-hydroxylase</fullName>
        <shortName evidence="1">DMQ hydroxylase</shortName>
        <ecNumber evidence="1">1.14.99.60</ecNumber>
    </recommendedName>
    <alternativeName>
        <fullName evidence="1">2-nonaprenyl-3-methyl-6-methoxy-1,4-benzoquinol hydroxylase</fullName>
    </alternativeName>
</protein>
<accession>C1DHY3</accession>
<dbReference type="EC" id="1.14.99.60" evidence="1"/>
<dbReference type="EMBL" id="CP001157">
    <property type="protein sequence ID" value="ACO80716.1"/>
    <property type="molecule type" value="Genomic_DNA"/>
</dbReference>
<dbReference type="RefSeq" id="WP_012703079.1">
    <property type="nucleotide sequence ID" value="NC_012560.1"/>
</dbReference>
<dbReference type="SMR" id="C1DHY3"/>
<dbReference type="STRING" id="322710.Avin_46070"/>
<dbReference type="EnsemblBacteria" id="ACO80716">
    <property type="protein sequence ID" value="ACO80716"/>
    <property type="gene ID" value="Avin_46070"/>
</dbReference>
<dbReference type="GeneID" id="88187491"/>
<dbReference type="KEGG" id="avn:Avin_46070"/>
<dbReference type="eggNOG" id="COG2941">
    <property type="taxonomic scope" value="Bacteria"/>
</dbReference>
<dbReference type="HOGENOM" id="CLU_088601_0_0_6"/>
<dbReference type="OrthoDB" id="5192789at2"/>
<dbReference type="UniPathway" id="UPA00232"/>
<dbReference type="Proteomes" id="UP000002424">
    <property type="component" value="Chromosome"/>
</dbReference>
<dbReference type="GO" id="GO:0005886">
    <property type="term" value="C:plasma membrane"/>
    <property type="evidence" value="ECO:0007669"/>
    <property type="project" value="UniProtKB-SubCell"/>
</dbReference>
<dbReference type="GO" id="GO:0008682">
    <property type="term" value="F:3-demethoxyubiquinol 3-hydroxylase activity"/>
    <property type="evidence" value="ECO:0007669"/>
    <property type="project" value="UniProtKB-EC"/>
</dbReference>
<dbReference type="GO" id="GO:0046872">
    <property type="term" value="F:metal ion binding"/>
    <property type="evidence" value="ECO:0007669"/>
    <property type="project" value="UniProtKB-KW"/>
</dbReference>
<dbReference type="GO" id="GO:0006744">
    <property type="term" value="P:ubiquinone biosynthetic process"/>
    <property type="evidence" value="ECO:0007669"/>
    <property type="project" value="UniProtKB-UniRule"/>
</dbReference>
<dbReference type="CDD" id="cd01042">
    <property type="entry name" value="DMQH"/>
    <property type="match status" value="1"/>
</dbReference>
<dbReference type="FunFam" id="1.20.1260.10:FF:000013">
    <property type="entry name" value="2-nonaprenyl-3-methyl-6-methoxy-1,4-benzoquinol hydroxylase"/>
    <property type="match status" value="1"/>
</dbReference>
<dbReference type="Gene3D" id="1.20.1260.10">
    <property type="match status" value="1"/>
</dbReference>
<dbReference type="HAMAP" id="MF_01658">
    <property type="entry name" value="COQ7"/>
    <property type="match status" value="1"/>
</dbReference>
<dbReference type="InterPro" id="IPR047809">
    <property type="entry name" value="COQ7_proteobact"/>
</dbReference>
<dbReference type="InterPro" id="IPR012347">
    <property type="entry name" value="Ferritin-like"/>
</dbReference>
<dbReference type="InterPro" id="IPR009078">
    <property type="entry name" value="Ferritin-like_SF"/>
</dbReference>
<dbReference type="InterPro" id="IPR011566">
    <property type="entry name" value="Ubq_synth_Coq7"/>
</dbReference>
<dbReference type="NCBIfam" id="NF033656">
    <property type="entry name" value="DMQ_monoox_COQ7"/>
    <property type="match status" value="1"/>
</dbReference>
<dbReference type="PANTHER" id="PTHR11237:SF4">
    <property type="entry name" value="5-DEMETHOXYUBIQUINONE HYDROXYLASE, MITOCHONDRIAL"/>
    <property type="match status" value="1"/>
</dbReference>
<dbReference type="PANTHER" id="PTHR11237">
    <property type="entry name" value="COENZYME Q10 BIOSYNTHESIS PROTEIN 7"/>
    <property type="match status" value="1"/>
</dbReference>
<dbReference type="Pfam" id="PF03232">
    <property type="entry name" value="COQ7"/>
    <property type="match status" value="1"/>
</dbReference>
<dbReference type="SUPFAM" id="SSF47240">
    <property type="entry name" value="Ferritin-like"/>
    <property type="match status" value="1"/>
</dbReference>
<sequence length="215" mass="23831">MANERHYSATDRLLLQADAALRTLLPFSGKPYRPSPAQGEPETQLDAGKARHVAGLMRINHTGEVCAQALYQGQALTARLPRVRGAMEQAANEEIDHLAWCEQRIRELNSRPSLLNPLFYGLSFGIGATAGLISDRISLGFVAATEDQVCKHLDDHLKQLPEEDRKSRAILEQMRIDEQQHATTALEAGGLRFPAPVKFGMTLLSKVMTKSTYRI</sequence>
<feature type="chain" id="PRO_1000215855" description="3-demethoxyubiquinol 3-hydroxylase">
    <location>
        <begin position="1"/>
        <end position="215"/>
    </location>
</feature>
<feature type="binding site" evidence="1">
    <location>
        <position position="64"/>
    </location>
    <ligand>
        <name>Fe cation</name>
        <dbReference type="ChEBI" id="CHEBI:24875"/>
        <label>1</label>
    </ligand>
</feature>
<feature type="binding site" evidence="1">
    <location>
        <position position="94"/>
    </location>
    <ligand>
        <name>Fe cation</name>
        <dbReference type="ChEBI" id="CHEBI:24875"/>
        <label>1</label>
    </ligand>
</feature>
<feature type="binding site" evidence="1">
    <location>
        <position position="94"/>
    </location>
    <ligand>
        <name>Fe cation</name>
        <dbReference type="ChEBI" id="CHEBI:24875"/>
        <label>2</label>
    </ligand>
</feature>
<feature type="binding site" evidence="1">
    <location>
        <position position="97"/>
    </location>
    <ligand>
        <name>Fe cation</name>
        <dbReference type="ChEBI" id="CHEBI:24875"/>
        <label>1</label>
    </ligand>
</feature>
<feature type="binding site" evidence="1">
    <location>
        <position position="146"/>
    </location>
    <ligand>
        <name>Fe cation</name>
        <dbReference type="ChEBI" id="CHEBI:24875"/>
        <label>2</label>
    </ligand>
</feature>
<feature type="binding site" evidence="1">
    <location>
        <position position="178"/>
    </location>
    <ligand>
        <name>Fe cation</name>
        <dbReference type="ChEBI" id="CHEBI:24875"/>
        <label>1</label>
    </ligand>
</feature>
<feature type="binding site" evidence="1">
    <location>
        <position position="178"/>
    </location>
    <ligand>
        <name>Fe cation</name>
        <dbReference type="ChEBI" id="CHEBI:24875"/>
        <label>2</label>
    </ligand>
</feature>
<feature type="binding site" evidence="1">
    <location>
        <position position="181"/>
    </location>
    <ligand>
        <name>Fe cation</name>
        <dbReference type="ChEBI" id="CHEBI:24875"/>
        <label>2</label>
    </ligand>
</feature>
<evidence type="ECO:0000255" key="1">
    <source>
        <dbReference type="HAMAP-Rule" id="MF_01658"/>
    </source>
</evidence>
<proteinExistence type="inferred from homology"/>
<gene>
    <name evidence="1" type="primary">coq7</name>
    <name type="ordered locus">Avin_46070</name>
</gene>